<evidence type="ECO:0000255" key="1">
    <source>
        <dbReference type="HAMAP-Rule" id="MF_01813"/>
    </source>
</evidence>
<evidence type="ECO:0000305" key="2"/>
<feature type="chain" id="PRO_0000193321" description="Ubiquinone/menaquinone biosynthesis C-methyltransferase UbiE">
    <location>
        <begin position="1"/>
        <end position="248"/>
    </location>
</feature>
<feature type="binding site" evidence="1">
    <location>
        <position position="68"/>
    </location>
    <ligand>
        <name>S-adenosyl-L-methionine</name>
        <dbReference type="ChEBI" id="CHEBI:59789"/>
    </ligand>
</feature>
<feature type="binding site" evidence="1">
    <location>
        <position position="92"/>
    </location>
    <ligand>
        <name>S-adenosyl-L-methionine</name>
        <dbReference type="ChEBI" id="CHEBI:59789"/>
    </ligand>
</feature>
<feature type="binding site" evidence="1">
    <location>
        <begin position="120"/>
        <end position="121"/>
    </location>
    <ligand>
        <name>S-adenosyl-L-methionine</name>
        <dbReference type="ChEBI" id="CHEBI:59789"/>
    </ligand>
</feature>
<dbReference type="EC" id="2.1.1.163" evidence="1"/>
<dbReference type="EC" id="2.1.1.201" evidence="1"/>
<dbReference type="EMBL" id="AJ235272">
    <property type="protein sequence ID" value="CAA15117.1"/>
    <property type="status" value="ALT_INIT"/>
    <property type="molecule type" value="Genomic_DNA"/>
</dbReference>
<dbReference type="PIR" id="C71674">
    <property type="entry name" value="C71674"/>
</dbReference>
<dbReference type="RefSeq" id="NP_221041.1">
    <property type="nucleotide sequence ID" value="NC_000963.1"/>
</dbReference>
<dbReference type="RefSeq" id="WP_004599522.1">
    <property type="nucleotide sequence ID" value="NC_000963.1"/>
</dbReference>
<dbReference type="SMR" id="Q9ZCP3"/>
<dbReference type="STRING" id="272947.gene:17555757"/>
<dbReference type="EnsemblBacteria" id="CAA15117">
    <property type="protein sequence ID" value="CAA15117"/>
    <property type="gene ID" value="CAA15117"/>
</dbReference>
<dbReference type="GeneID" id="57569805"/>
<dbReference type="KEGG" id="rpr:RP680"/>
<dbReference type="PATRIC" id="fig|272947.5.peg.702"/>
<dbReference type="eggNOG" id="COG2226">
    <property type="taxonomic scope" value="Bacteria"/>
</dbReference>
<dbReference type="HOGENOM" id="CLU_037990_0_1_5"/>
<dbReference type="OrthoDB" id="9808140at2"/>
<dbReference type="UniPathway" id="UPA00079">
    <property type="reaction ID" value="UER00169"/>
</dbReference>
<dbReference type="UniPathway" id="UPA00232"/>
<dbReference type="Proteomes" id="UP000002480">
    <property type="component" value="Chromosome"/>
</dbReference>
<dbReference type="GO" id="GO:0008425">
    <property type="term" value="F:2-methoxy-6-polyprenyl-1,4-benzoquinol methyltransferase activity"/>
    <property type="evidence" value="ECO:0007669"/>
    <property type="project" value="UniProtKB-UniRule"/>
</dbReference>
<dbReference type="GO" id="GO:0043770">
    <property type="term" value="F:demethylmenaquinone methyltransferase activity"/>
    <property type="evidence" value="ECO:0007669"/>
    <property type="project" value="UniProtKB-UniRule"/>
</dbReference>
<dbReference type="GO" id="GO:0009060">
    <property type="term" value="P:aerobic respiration"/>
    <property type="evidence" value="ECO:0007669"/>
    <property type="project" value="UniProtKB-UniRule"/>
</dbReference>
<dbReference type="GO" id="GO:0009234">
    <property type="term" value="P:menaquinone biosynthetic process"/>
    <property type="evidence" value="ECO:0007669"/>
    <property type="project" value="UniProtKB-UniRule"/>
</dbReference>
<dbReference type="GO" id="GO:0032259">
    <property type="term" value="P:methylation"/>
    <property type="evidence" value="ECO:0007669"/>
    <property type="project" value="UniProtKB-KW"/>
</dbReference>
<dbReference type="CDD" id="cd02440">
    <property type="entry name" value="AdoMet_MTases"/>
    <property type="match status" value="1"/>
</dbReference>
<dbReference type="FunFam" id="3.40.50.150:FF:000250">
    <property type="entry name" value="Ubiquinone/menaquinone biosynthesis C-methyltransferase UbiE"/>
    <property type="match status" value="1"/>
</dbReference>
<dbReference type="Gene3D" id="3.40.50.150">
    <property type="entry name" value="Vaccinia Virus protein VP39"/>
    <property type="match status" value="1"/>
</dbReference>
<dbReference type="HAMAP" id="MF_01813">
    <property type="entry name" value="MenG_UbiE_methyltr"/>
    <property type="match status" value="1"/>
</dbReference>
<dbReference type="InterPro" id="IPR029063">
    <property type="entry name" value="SAM-dependent_MTases_sf"/>
</dbReference>
<dbReference type="InterPro" id="IPR004033">
    <property type="entry name" value="UbiE/COQ5_MeTrFase"/>
</dbReference>
<dbReference type="InterPro" id="IPR023576">
    <property type="entry name" value="UbiE/COQ5_MeTrFase_CS"/>
</dbReference>
<dbReference type="NCBIfam" id="TIGR01934">
    <property type="entry name" value="MenG_MenH_UbiE"/>
    <property type="match status" value="1"/>
</dbReference>
<dbReference type="NCBIfam" id="NF001242">
    <property type="entry name" value="PRK00216.1-3"/>
    <property type="match status" value="1"/>
</dbReference>
<dbReference type="NCBIfam" id="NF001244">
    <property type="entry name" value="PRK00216.1-5"/>
    <property type="match status" value="1"/>
</dbReference>
<dbReference type="PANTHER" id="PTHR43591:SF24">
    <property type="entry name" value="2-METHOXY-6-POLYPRENYL-1,4-BENZOQUINOL METHYLASE, MITOCHONDRIAL"/>
    <property type="match status" value="1"/>
</dbReference>
<dbReference type="PANTHER" id="PTHR43591">
    <property type="entry name" value="METHYLTRANSFERASE"/>
    <property type="match status" value="1"/>
</dbReference>
<dbReference type="Pfam" id="PF01209">
    <property type="entry name" value="Ubie_methyltran"/>
    <property type="match status" value="1"/>
</dbReference>
<dbReference type="SUPFAM" id="SSF53335">
    <property type="entry name" value="S-adenosyl-L-methionine-dependent methyltransferases"/>
    <property type="match status" value="1"/>
</dbReference>
<dbReference type="PROSITE" id="PS51608">
    <property type="entry name" value="SAM_MT_UBIE"/>
    <property type="match status" value="1"/>
</dbReference>
<dbReference type="PROSITE" id="PS01183">
    <property type="entry name" value="UBIE_1"/>
    <property type="match status" value="1"/>
</dbReference>
<dbReference type="PROSITE" id="PS01184">
    <property type="entry name" value="UBIE_2"/>
    <property type="match status" value="1"/>
</dbReference>
<protein>
    <recommendedName>
        <fullName evidence="1">Ubiquinone/menaquinone biosynthesis C-methyltransferase UbiE</fullName>
        <ecNumber evidence="1">2.1.1.163</ecNumber>
        <ecNumber evidence="1">2.1.1.201</ecNumber>
    </recommendedName>
    <alternativeName>
        <fullName evidence="1">2-methoxy-6-polyprenyl-1,4-benzoquinol methylase</fullName>
    </alternativeName>
    <alternativeName>
        <fullName evidence="1">Demethylmenaquinone methyltransferase</fullName>
    </alternativeName>
</protein>
<keyword id="KW-0474">Menaquinone biosynthesis</keyword>
<keyword id="KW-0489">Methyltransferase</keyword>
<keyword id="KW-1185">Reference proteome</keyword>
<keyword id="KW-0949">S-adenosyl-L-methionine</keyword>
<keyword id="KW-0808">Transferase</keyword>
<keyword id="KW-0831">Ubiquinone biosynthesis</keyword>
<proteinExistence type="inferred from homology"/>
<organism>
    <name type="scientific">Rickettsia prowazekii (strain Madrid E)</name>
    <dbReference type="NCBI Taxonomy" id="272947"/>
    <lineage>
        <taxon>Bacteria</taxon>
        <taxon>Pseudomonadati</taxon>
        <taxon>Pseudomonadota</taxon>
        <taxon>Alphaproteobacteria</taxon>
        <taxon>Rickettsiales</taxon>
        <taxon>Rickettsiaceae</taxon>
        <taxon>Rickettsieae</taxon>
        <taxon>Rickettsia</taxon>
        <taxon>typhus group</taxon>
    </lineage>
</organism>
<accession>Q9ZCP3</accession>
<name>UBIE_RICPR</name>
<comment type="function">
    <text evidence="1">Methyltransferase required for the conversion of demethylmenaquinol (DMKH2) to menaquinol (MKH2) and the conversion of 2-polyprenyl-6-methoxy-1,4-benzoquinol (DDMQH2) to 2-polyprenyl-3-methyl-6-methoxy-1,4-benzoquinol (DMQH2).</text>
</comment>
<comment type="catalytic activity">
    <reaction evidence="1">
        <text>a 2-demethylmenaquinol + S-adenosyl-L-methionine = a menaquinol + S-adenosyl-L-homocysteine + H(+)</text>
        <dbReference type="Rhea" id="RHEA:42640"/>
        <dbReference type="Rhea" id="RHEA-COMP:9539"/>
        <dbReference type="Rhea" id="RHEA-COMP:9563"/>
        <dbReference type="ChEBI" id="CHEBI:15378"/>
        <dbReference type="ChEBI" id="CHEBI:18151"/>
        <dbReference type="ChEBI" id="CHEBI:55437"/>
        <dbReference type="ChEBI" id="CHEBI:57856"/>
        <dbReference type="ChEBI" id="CHEBI:59789"/>
        <dbReference type="EC" id="2.1.1.163"/>
    </reaction>
</comment>
<comment type="catalytic activity">
    <reaction evidence="1">
        <text>a 2-methoxy-6-(all-trans-polyprenyl)benzene-1,4-diol + S-adenosyl-L-methionine = a 5-methoxy-2-methyl-3-(all-trans-polyprenyl)benzene-1,4-diol + S-adenosyl-L-homocysteine + H(+)</text>
        <dbReference type="Rhea" id="RHEA:28286"/>
        <dbReference type="Rhea" id="RHEA-COMP:10858"/>
        <dbReference type="Rhea" id="RHEA-COMP:10859"/>
        <dbReference type="ChEBI" id="CHEBI:15378"/>
        <dbReference type="ChEBI" id="CHEBI:57856"/>
        <dbReference type="ChEBI" id="CHEBI:59789"/>
        <dbReference type="ChEBI" id="CHEBI:84166"/>
        <dbReference type="ChEBI" id="CHEBI:84167"/>
        <dbReference type="EC" id="2.1.1.201"/>
    </reaction>
</comment>
<comment type="pathway">
    <text evidence="1">Quinol/quinone metabolism; menaquinone biosynthesis; menaquinol from 1,4-dihydroxy-2-naphthoate: step 2/2.</text>
</comment>
<comment type="pathway">
    <text evidence="1">Cofactor biosynthesis; ubiquinone biosynthesis.</text>
</comment>
<comment type="similarity">
    <text evidence="1">Belongs to the class I-like SAM-binding methyltransferase superfamily. MenG/UbiE family.</text>
</comment>
<comment type="sequence caution" evidence="2">
    <conflict type="erroneous initiation">
        <sequence resource="EMBL-CDS" id="CAA15117"/>
    </conflict>
</comment>
<reference key="1">
    <citation type="journal article" date="1998" name="Nature">
        <title>The genome sequence of Rickettsia prowazekii and the origin of mitochondria.</title>
        <authorList>
            <person name="Andersson S.G.E."/>
            <person name="Zomorodipour A."/>
            <person name="Andersson J.O."/>
            <person name="Sicheritz-Ponten T."/>
            <person name="Alsmark U.C.M."/>
            <person name="Podowski R.M."/>
            <person name="Naeslund A.K."/>
            <person name="Eriksson A.-S."/>
            <person name="Winkler H.H."/>
            <person name="Kurland C.G."/>
        </authorList>
    </citation>
    <scope>NUCLEOTIDE SEQUENCE [LARGE SCALE GENOMIC DNA]</scope>
    <source>
        <strain>Madrid E</strain>
    </source>
</reference>
<sequence length="248" mass="28434">MYNTNFGFKKVDYTKKQWLINNIFSRVADKYDLMNDLMSIGLHRLWKDEFIMQIPNLNSNILDVASGSGDIALKLAKKAKDRGNNISLILSDINEEMLNNAKKKSIDLNLFQNIKFIVANAEELPFSDNSFDYYTIAFGIRNVPDINKALKEAYRVLKPMGKFVCLEFSKVKEGILKDFYKFYSFNIIPSIGQIIAGNKEAYEYLVESIALFPSQDDFRIMIKESGFEEVHYKNLSGGIVAIHSAYKI</sequence>
<gene>
    <name evidence="1" type="primary">ubiE</name>
    <name type="ordered locus">RP680</name>
</gene>